<organism>
    <name type="scientific">Staphylococcus aureus (strain MSSA476)</name>
    <dbReference type="NCBI Taxonomy" id="282459"/>
    <lineage>
        <taxon>Bacteria</taxon>
        <taxon>Bacillati</taxon>
        <taxon>Bacillota</taxon>
        <taxon>Bacilli</taxon>
        <taxon>Bacillales</taxon>
        <taxon>Staphylococcaceae</taxon>
        <taxon>Staphylococcus</taxon>
    </lineage>
</organism>
<feature type="chain" id="PRO_0000088463" description="Putative zinc metalloprotease SAS1196">
    <location>
        <begin position="1"/>
        <end position="428"/>
    </location>
</feature>
<feature type="transmembrane region" description="Helical" evidence="1">
    <location>
        <begin position="172"/>
        <end position="194"/>
    </location>
</feature>
<feature type="transmembrane region" description="Helical" evidence="1">
    <location>
        <begin position="309"/>
        <end position="331"/>
    </location>
</feature>
<feature type="transmembrane region" description="Helical" evidence="1">
    <location>
        <begin position="352"/>
        <end position="374"/>
    </location>
</feature>
<feature type="transmembrane region" description="Helical" evidence="1">
    <location>
        <begin position="401"/>
        <end position="420"/>
    </location>
</feature>
<feature type="domain" description="PDZ">
    <location>
        <begin position="186"/>
        <end position="269"/>
    </location>
</feature>
<feature type="active site" evidence="2">
    <location>
        <position position="22"/>
    </location>
</feature>
<feature type="binding site" evidence="2">
    <location>
        <position position="21"/>
    </location>
    <ligand>
        <name>Zn(2+)</name>
        <dbReference type="ChEBI" id="CHEBI:29105"/>
        <note>catalytic</note>
    </ligand>
</feature>
<feature type="binding site" evidence="2">
    <location>
        <position position="25"/>
    </location>
    <ligand>
        <name>Zn(2+)</name>
        <dbReference type="ChEBI" id="CHEBI:29105"/>
        <note>catalytic</note>
    </ligand>
</feature>
<proteinExistence type="inferred from homology"/>
<dbReference type="EC" id="3.4.24.-"/>
<dbReference type="EMBL" id="BX571857">
    <property type="protein sequence ID" value="CAG42973.1"/>
    <property type="molecule type" value="Genomic_DNA"/>
</dbReference>
<dbReference type="SMR" id="Q6G9V1"/>
<dbReference type="KEGG" id="sas:SAS1196"/>
<dbReference type="HOGENOM" id="CLU_025778_1_0_9"/>
<dbReference type="GO" id="GO:0005886">
    <property type="term" value="C:plasma membrane"/>
    <property type="evidence" value="ECO:0007669"/>
    <property type="project" value="UniProtKB-SubCell"/>
</dbReference>
<dbReference type="GO" id="GO:0046872">
    <property type="term" value="F:metal ion binding"/>
    <property type="evidence" value="ECO:0007669"/>
    <property type="project" value="UniProtKB-KW"/>
</dbReference>
<dbReference type="GO" id="GO:0004222">
    <property type="term" value="F:metalloendopeptidase activity"/>
    <property type="evidence" value="ECO:0007669"/>
    <property type="project" value="InterPro"/>
</dbReference>
<dbReference type="GO" id="GO:0006508">
    <property type="term" value="P:proteolysis"/>
    <property type="evidence" value="ECO:0007669"/>
    <property type="project" value="UniProtKB-KW"/>
</dbReference>
<dbReference type="CDD" id="cd23081">
    <property type="entry name" value="cpPDZ_EcRseP-like"/>
    <property type="match status" value="1"/>
</dbReference>
<dbReference type="CDD" id="cd06163">
    <property type="entry name" value="S2P-M50_PDZ_RseP-like"/>
    <property type="match status" value="1"/>
</dbReference>
<dbReference type="Gene3D" id="2.30.42.10">
    <property type="match status" value="1"/>
</dbReference>
<dbReference type="InterPro" id="IPR001478">
    <property type="entry name" value="PDZ"/>
</dbReference>
<dbReference type="InterPro" id="IPR036034">
    <property type="entry name" value="PDZ_sf"/>
</dbReference>
<dbReference type="InterPro" id="IPR004387">
    <property type="entry name" value="Pept_M50_Zn"/>
</dbReference>
<dbReference type="InterPro" id="IPR008915">
    <property type="entry name" value="Peptidase_M50"/>
</dbReference>
<dbReference type="NCBIfam" id="TIGR00054">
    <property type="entry name" value="RIP metalloprotease RseP"/>
    <property type="match status" value="1"/>
</dbReference>
<dbReference type="PANTHER" id="PTHR42837:SF2">
    <property type="entry name" value="MEMBRANE METALLOPROTEASE ARASP2, CHLOROPLASTIC-RELATED"/>
    <property type="match status" value="1"/>
</dbReference>
<dbReference type="PANTHER" id="PTHR42837">
    <property type="entry name" value="REGULATOR OF SIGMA-E PROTEASE RSEP"/>
    <property type="match status" value="1"/>
</dbReference>
<dbReference type="Pfam" id="PF13180">
    <property type="entry name" value="PDZ_2"/>
    <property type="match status" value="1"/>
</dbReference>
<dbReference type="Pfam" id="PF02163">
    <property type="entry name" value="Peptidase_M50"/>
    <property type="match status" value="1"/>
</dbReference>
<dbReference type="SUPFAM" id="SSF50156">
    <property type="entry name" value="PDZ domain-like"/>
    <property type="match status" value="1"/>
</dbReference>
<dbReference type="PROSITE" id="PS00142">
    <property type="entry name" value="ZINC_PROTEASE"/>
    <property type="match status" value="1"/>
</dbReference>
<keyword id="KW-1003">Cell membrane</keyword>
<keyword id="KW-0378">Hydrolase</keyword>
<keyword id="KW-0472">Membrane</keyword>
<keyword id="KW-0479">Metal-binding</keyword>
<keyword id="KW-0482">Metalloprotease</keyword>
<keyword id="KW-0645">Protease</keyword>
<keyword id="KW-0812">Transmembrane</keyword>
<keyword id="KW-1133">Transmembrane helix</keyword>
<keyword id="KW-0862">Zinc</keyword>
<reference key="1">
    <citation type="journal article" date="2004" name="Proc. Natl. Acad. Sci. U.S.A.">
        <title>Complete genomes of two clinical Staphylococcus aureus strains: evidence for the rapid evolution of virulence and drug resistance.</title>
        <authorList>
            <person name="Holden M.T.G."/>
            <person name="Feil E.J."/>
            <person name="Lindsay J.A."/>
            <person name="Peacock S.J."/>
            <person name="Day N.P.J."/>
            <person name="Enright M.C."/>
            <person name="Foster T.J."/>
            <person name="Moore C.E."/>
            <person name="Hurst L."/>
            <person name="Atkin R."/>
            <person name="Barron A."/>
            <person name="Bason N."/>
            <person name="Bentley S.D."/>
            <person name="Chillingworth C."/>
            <person name="Chillingworth T."/>
            <person name="Churcher C."/>
            <person name="Clark L."/>
            <person name="Corton C."/>
            <person name="Cronin A."/>
            <person name="Doggett J."/>
            <person name="Dowd L."/>
            <person name="Feltwell T."/>
            <person name="Hance Z."/>
            <person name="Harris B."/>
            <person name="Hauser H."/>
            <person name="Holroyd S."/>
            <person name="Jagels K."/>
            <person name="James K.D."/>
            <person name="Lennard N."/>
            <person name="Line A."/>
            <person name="Mayes R."/>
            <person name="Moule S."/>
            <person name="Mungall K."/>
            <person name="Ormond D."/>
            <person name="Quail M.A."/>
            <person name="Rabbinowitsch E."/>
            <person name="Rutherford K.M."/>
            <person name="Sanders M."/>
            <person name="Sharp S."/>
            <person name="Simmonds M."/>
            <person name="Stevens K."/>
            <person name="Whitehead S."/>
            <person name="Barrell B.G."/>
            <person name="Spratt B.G."/>
            <person name="Parkhill J."/>
        </authorList>
    </citation>
    <scope>NUCLEOTIDE SEQUENCE [LARGE SCALE GENOMIC DNA]</scope>
    <source>
        <strain>MSSA476</strain>
    </source>
</reference>
<name>Y1196_STAAS</name>
<protein>
    <recommendedName>
        <fullName>Putative zinc metalloprotease SAS1196</fullName>
        <ecNumber>3.4.24.-</ecNumber>
    </recommendedName>
</protein>
<sequence length="428" mass="48136">MSYLVTIIAFIIVFGVLVTVHEYGHMFFAKRAGIMCPEFAIGMGPKIFSFRKNETLYTIRLLPVGGYVRMAGDGLEEPPVEPGMNVKIKLNEENEITHIILDDHHKFQQIEAIEVKKCDFKDDLFIEGITAYDNERHHFKIARKSFFVENGSLVQIAPRDRQFAHKKPWPKFLTLFAGPLFNFILALVLFIGLAYYQGTPTSTVEQVADKYPAQQAGLQKGDKIVQIGKYKISEFDDVDKALDKVKDNKTTVKFERDGKTKSVELTPKKTERKLTKVSSETKYVLGFQPASERTLFKPIVYGFESFLKGSTLIFTAVVGMLASIFTGGFSFDMLNGPVGIYHNVDSVVKAGIISLIGYTALLSVNLGIMNLIPIPALDGGRILFVIYEAIFRKPVNKKAETTIIAIGAIFMVVIMILVTWNDIRRYFL</sequence>
<evidence type="ECO:0000255" key="1"/>
<evidence type="ECO:0000255" key="2">
    <source>
        <dbReference type="PROSITE-ProRule" id="PRU10095"/>
    </source>
</evidence>
<evidence type="ECO:0000305" key="3"/>
<comment type="cofactor">
    <cofactor evidence="3">
        <name>Zn(2+)</name>
        <dbReference type="ChEBI" id="CHEBI:29105"/>
    </cofactor>
</comment>
<comment type="subcellular location">
    <subcellularLocation>
        <location evidence="3">Cell membrane</location>
        <topology evidence="3">Multi-pass membrane protein</topology>
    </subcellularLocation>
</comment>
<comment type="similarity">
    <text evidence="3">Belongs to the peptidase M50B family.</text>
</comment>
<gene>
    <name type="ordered locus">SAS1196</name>
</gene>
<accession>Q6G9V1</accession>